<organism>
    <name type="scientific">Vibrio atlanticus (strain LGP32)</name>
    <name type="common">Vibrio splendidus (strain Mel32)</name>
    <dbReference type="NCBI Taxonomy" id="575788"/>
    <lineage>
        <taxon>Bacteria</taxon>
        <taxon>Pseudomonadati</taxon>
        <taxon>Pseudomonadota</taxon>
        <taxon>Gammaproteobacteria</taxon>
        <taxon>Vibrionales</taxon>
        <taxon>Vibrionaceae</taxon>
        <taxon>Vibrio</taxon>
    </lineage>
</organism>
<proteinExistence type="inferred from homology"/>
<gene>
    <name type="ordered locus">VS_2370</name>
</gene>
<comment type="similarity">
    <text evidence="1">Belongs to the UPF0253 family.</text>
</comment>
<accession>B7VIT4</accession>
<protein>
    <recommendedName>
        <fullName evidence="1">UPF0253 protein VS_2370</fullName>
    </recommendedName>
</protein>
<sequence length="67" mass="7314">MKVYDCCDLVRELYSQIGSGDQGYIPKAITCAVKTLNDLAADESLPKEARDRAAFAAANLLISDFED</sequence>
<reference key="1">
    <citation type="submission" date="2009-02" db="EMBL/GenBank/DDBJ databases">
        <title>Vibrio splendidus str. LGP32 complete genome.</title>
        <authorList>
            <person name="Mazel D."/>
            <person name="Le Roux F."/>
        </authorList>
    </citation>
    <scope>NUCLEOTIDE SEQUENCE [LARGE SCALE GENOMIC DNA]</scope>
    <source>
        <strain>LGP32</strain>
    </source>
</reference>
<feature type="chain" id="PRO_1000149730" description="UPF0253 protein VS_2370">
    <location>
        <begin position="1"/>
        <end position="67"/>
    </location>
</feature>
<evidence type="ECO:0000255" key="1">
    <source>
        <dbReference type="HAMAP-Rule" id="MF_01064"/>
    </source>
</evidence>
<name>Y2370_VIBA3</name>
<dbReference type="EMBL" id="FM954972">
    <property type="protein sequence ID" value="CAV19530.1"/>
    <property type="molecule type" value="Genomic_DNA"/>
</dbReference>
<dbReference type="SMR" id="B7VIT4"/>
<dbReference type="STRING" id="575788.VS_2370"/>
<dbReference type="KEGG" id="vsp:VS_2370"/>
<dbReference type="eggNOG" id="ENOG5032Z3X">
    <property type="taxonomic scope" value="Bacteria"/>
</dbReference>
<dbReference type="HOGENOM" id="CLU_190008_0_0_6"/>
<dbReference type="Proteomes" id="UP000009100">
    <property type="component" value="Chromosome 1"/>
</dbReference>
<dbReference type="HAMAP" id="MF_01064">
    <property type="entry name" value="UPF0253"/>
    <property type="match status" value="1"/>
</dbReference>
<dbReference type="InterPro" id="IPR009624">
    <property type="entry name" value="UPF0253"/>
</dbReference>
<dbReference type="NCBIfam" id="NF003436">
    <property type="entry name" value="PRK04964.1"/>
    <property type="match status" value="1"/>
</dbReference>
<dbReference type="Pfam" id="PF06786">
    <property type="entry name" value="UPF0253"/>
    <property type="match status" value="1"/>
</dbReference>